<proteinExistence type="inferred from homology"/>
<accession>A0K4Q2</accession>
<keyword id="KW-0349">Heme</keyword>
<keyword id="KW-0376">Hydrogen peroxide</keyword>
<keyword id="KW-0408">Iron</keyword>
<keyword id="KW-0479">Metal-binding</keyword>
<keyword id="KW-0560">Oxidoreductase</keyword>
<keyword id="KW-0575">Peroxidase</keyword>
<organism>
    <name type="scientific">Burkholderia cenocepacia (strain HI2424)</name>
    <dbReference type="NCBI Taxonomy" id="331272"/>
    <lineage>
        <taxon>Bacteria</taxon>
        <taxon>Pseudomonadati</taxon>
        <taxon>Pseudomonadota</taxon>
        <taxon>Betaproteobacteria</taxon>
        <taxon>Burkholderiales</taxon>
        <taxon>Burkholderiaceae</taxon>
        <taxon>Burkholderia</taxon>
        <taxon>Burkholderia cepacia complex</taxon>
    </lineage>
</organism>
<comment type="function">
    <text evidence="1">Bifunctional enzyme with both catalase and broad-spectrum peroxidase activity.</text>
</comment>
<comment type="catalytic activity">
    <reaction evidence="1">
        <text>H2O2 + AH2 = A + 2 H2O</text>
        <dbReference type="Rhea" id="RHEA:30275"/>
        <dbReference type="ChEBI" id="CHEBI:13193"/>
        <dbReference type="ChEBI" id="CHEBI:15377"/>
        <dbReference type="ChEBI" id="CHEBI:16240"/>
        <dbReference type="ChEBI" id="CHEBI:17499"/>
        <dbReference type="EC" id="1.11.1.21"/>
    </reaction>
</comment>
<comment type="catalytic activity">
    <reaction evidence="1">
        <text>2 H2O2 = O2 + 2 H2O</text>
        <dbReference type="Rhea" id="RHEA:20309"/>
        <dbReference type="ChEBI" id="CHEBI:15377"/>
        <dbReference type="ChEBI" id="CHEBI:15379"/>
        <dbReference type="ChEBI" id="CHEBI:16240"/>
        <dbReference type="EC" id="1.11.1.21"/>
    </reaction>
</comment>
<comment type="cofactor">
    <cofactor evidence="1">
        <name>heme b</name>
        <dbReference type="ChEBI" id="CHEBI:60344"/>
    </cofactor>
    <text evidence="1">Binds 1 heme b (iron(II)-protoporphyrin IX) group per dimer.</text>
</comment>
<comment type="subunit">
    <text evidence="1">Homodimer or homotetramer.</text>
</comment>
<comment type="PTM">
    <text evidence="1">Formation of the three residue Trp-Tyr-Met cross-link is important for the catalase, but not the peroxidase activity of the enzyme.</text>
</comment>
<comment type="similarity">
    <text evidence="1">Belongs to the peroxidase family. Peroxidase/catalase subfamily.</text>
</comment>
<sequence length="728" mass="79214">MSNETKCPFNHTAGSGTTNKDWWPNQLNLNVLHRHSALSDPMDPDFDYAEAFKKLDLAAVKQDLHALMTTSQDWWPADFGHYGGLFVRMAWHSAGTYRTADGRGGAGGGQQRFAPLNSWPDNVSLDKARRLLWPIKQKYGRNISWADLLILTGNVALESMGFKTFGYAGGRADTWEPDDVYWGSEKIWLELSGGPNSRYTGKRELESPLAAVQMGLIYVNPEGPDGNPDPVAAAHDIRETFARMAMNDEETVALIAGGHTFGKTHGAGPASNVGPEPEAAGLEEQGLGWKSTFGTGKGKDTITSGLEVTWTSTPTKWSNDFFKHLFSYEWELTKSPAGAHQWVAKDAGEVIPDAYDASKKHRPTMLTTDLSLRFDPAYEKISRRFYENPAEFADAFARAWFKLTHRDMGPRARYLGPEVPAEHLLWQDPIPAVDHPLIDAADVAALKAKVLATGLSVSQLVSTAWASAATFRGSDKRGGANGARIRLAPQKDWEVNQPAALATVLETLEGVQKAFNDAQTDGKKVSLADLIVLAGAAGVEQAAKNAGIAISVPFAPGRMDASQEETDVDAMAVLEPVADGFRNYLKSAYKTPAEALLVDKAQLLTLTAPEMTVLVGGLRVLGANVGDSKHGVFTDRPGTLSNDFFANLLDMGTEWKPVSAANDVFEGRDRATGAVKWTGTRVDLIFGSHSQLRALAEVYGSADAQEKFVRDFVAAWNKVMNLDRFDLA</sequence>
<protein>
    <recommendedName>
        <fullName evidence="1">Catalase-peroxidase 1</fullName>
        <shortName evidence="1">CP 1</shortName>
        <ecNumber evidence="1">1.11.1.21</ecNumber>
    </recommendedName>
    <alternativeName>
        <fullName evidence="1">Peroxidase/catalase 1</fullName>
    </alternativeName>
</protein>
<name>KATG1_BURCH</name>
<reference key="1">
    <citation type="submission" date="2006-08" db="EMBL/GenBank/DDBJ databases">
        <title>Complete sequence of chromosome 1 of Burkholderia cenocepacia HI2424.</title>
        <authorList>
            <person name="Copeland A."/>
            <person name="Lucas S."/>
            <person name="Lapidus A."/>
            <person name="Barry K."/>
            <person name="Detter J.C."/>
            <person name="Glavina del Rio T."/>
            <person name="Hammon N."/>
            <person name="Israni S."/>
            <person name="Pitluck S."/>
            <person name="Chain P."/>
            <person name="Malfatti S."/>
            <person name="Shin M."/>
            <person name="Vergez L."/>
            <person name="Schmutz J."/>
            <person name="Larimer F."/>
            <person name="Land M."/>
            <person name="Hauser L."/>
            <person name="Kyrpides N."/>
            <person name="Kim E."/>
            <person name="LiPuma J.J."/>
            <person name="Gonzalez C.F."/>
            <person name="Konstantinidis K."/>
            <person name="Tiedje J.M."/>
            <person name="Richardson P."/>
        </authorList>
    </citation>
    <scope>NUCLEOTIDE SEQUENCE [LARGE SCALE GENOMIC DNA]</scope>
    <source>
        <strain>HI2424</strain>
    </source>
</reference>
<dbReference type="EC" id="1.11.1.21" evidence="1"/>
<dbReference type="EMBL" id="CP000458">
    <property type="protein sequence ID" value="ABK07479.1"/>
    <property type="molecule type" value="Genomic_DNA"/>
</dbReference>
<dbReference type="RefSeq" id="WP_011544623.1">
    <property type="nucleotide sequence ID" value="NC_008542.1"/>
</dbReference>
<dbReference type="SMR" id="A0K4Q2"/>
<dbReference type="PeroxiBase" id="2291">
    <property type="entry name" value="BcenCP01_HI2424"/>
</dbReference>
<dbReference type="KEGG" id="bch:Bcen2424_0726"/>
<dbReference type="HOGENOM" id="CLU_025424_2_0_4"/>
<dbReference type="GO" id="GO:0005829">
    <property type="term" value="C:cytosol"/>
    <property type="evidence" value="ECO:0007669"/>
    <property type="project" value="TreeGrafter"/>
</dbReference>
<dbReference type="GO" id="GO:0004096">
    <property type="term" value="F:catalase activity"/>
    <property type="evidence" value="ECO:0007669"/>
    <property type="project" value="UniProtKB-UniRule"/>
</dbReference>
<dbReference type="GO" id="GO:0020037">
    <property type="term" value="F:heme binding"/>
    <property type="evidence" value="ECO:0007669"/>
    <property type="project" value="InterPro"/>
</dbReference>
<dbReference type="GO" id="GO:0046872">
    <property type="term" value="F:metal ion binding"/>
    <property type="evidence" value="ECO:0007669"/>
    <property type="project" value="UniProtKB-KW"/>
</dbReference>
<dbReference type="GO" id="GO:0070301">
    <property type="term" value="P:cellular response to hydrogen peroxide"/>
    <property type="evidence" value="ECO:0007669"/>
    <property type="project" value="TreeGrafter"/>
</dbReference>
<dbReference type="GO" id="GO:0042744">
    <property type="term" value="P:hydrogen peroxide catabolic process"/>
    <property type="evidence" value="ECO:0007669"/>
    <property type="project" value="UniProtKB-KW"/>
</dbReference>
<dbReference type="CDD" id="cd00649">
    <property type="entry name" value="catalase_peroxidase_1"/>
    <property type="match status" value="1"/>
</dbReference>
<dbReference type="CDD" id="cd08200">
    <property type="entry name" value="catalase_peroxidase_2"/>
    <property type="match status" value="1"/>
</dbReference>
<dbReference type="FunFam" id="1.10.420.10:FF:000002">
    <property type="entry name" value="Catalase-peroxidase"/>
    <property type="match status" value="1"/>
</dbReference>
<dbReference type="FunFam" id="1.10.420.10:FF:000004">
    <property type="entry name" value="Catalase-peroxidase"/>
    <property type="match status" value="1"/>
</dbReference>
<dbReference type="FunFam" id="1.10.520.10:FF:000002">
    <property type="entry name" value="Catalase-peroxidase"/>
    <property type="match status" value="1"/>
</dbReference>
<dbReference type="FunFam" id="1.10.520.10:FF:000004">
    <property type="entry name" value="Catalase-peroxidase"/>
    <property type="match status" value="1"/>
</dbReference>
<dbReference type="Gene3D" id="1.10.520.10">
    <property type="match status" value="2"/>
</dbReference>
<dbReference type="Gene3D" id="1.10.420.10">
    <property type="entry name" value="Peroxidase, domain 2"/>
    <property type="match status" value="2"/>
</dbReference>
<dbReference type="HAMAP" id="MF_01961">
    <property type="entry name" value="Catal_peroxid"/>
    <property type="match status" value="1"/>
</dbReference>
<dbReference type="InterPro" id="IPR000763">
    <property type="entry name" value="Catalase_peroxidase"/>
</dbReference>
<dbReference type="InterPro" id="IPR002016">
    <property type="entry name" value="Haem_peroxidase"/>
</dbReference>
<dbReference type="InterPro" id="IPR010255">
    <property type="entry name" value="Haem_peroxidase_sf"/>
</dbReference>
<dbReference type="InterPro" id="IPR019794">
    <property type="entry name" value="Peroxidases_AS"/>
</dbReference>
<dbReference type="InterPro" id="IPR019793">
    <property type="entry name" value="Peroxidases_heam-ligand_BS"/>
</dbReference>
<dbReference type="NCBIfam" id="TIGR00198">
    <property type="entry name" value="cat_per_HPI"/>
    <property type="match status" value="1"/>
</dbReference>
<dbReference type="NCBIfam" id="NF011635">
    <property type="entry name" value="PRK15061.1"/>
    <property type="match status" value="1"/>
</dbReference>
<dbReference type="PANTHER" id="PTHR30555:SF0">
    <property type="entry name" value="CATALASE-PEROXIDASE"/>
    <property type="match status" value="1"/>
</dbReference>
<dbReference type="PANTHER" id="PTHR30555">
    <property type="entry name" value="HYDROPEROXIDASE I, BIFUNCTIONAL CATALASE-PEROXIDASE"/>
    <property type="match status" value="1"/>
</dbReference>
<dbReference type="Pfam" id="PF00141">
    <property type="entry name" value="peroxidase"/>
    <property type="match status" value="2"/>
</dbReference>
<dbReference type="PRINTS" id="PR00460">
    <property type="entry name" value="BPEROXIDASE"/>
</dbReference>
<dbReference type="PRINTS" id="PR00458">
    <property type="entry name" value="PEROXIDASE"/>
</dbReference>
<dbReference type="SUPFAM" id="SSF48113">
    <property type="entry name" value="Heme-dependent peroxidases"/>
    <property type="match status" value="2"/>
</dbReference>
<dbReference type="PROSITE" id="PS00435">
    <property type="entry name" value="PEROXIDASE_1"/>
    <property type="match status" value="1"/>
</dbReference>
<dbReference type="PROSITE" id="PS00436">
    <property type="entry name" value="PEROXIDASE_2"/>
    <property type="match status" value="1"/>
</dbReference>
<dbReference type="PROSITE" id="PS50873">
    <property type="entry name" value="PEROXIDASE_4"/>
    <property type="match status" value="1"/>
</dbReference>
<evidence type="ECO:0000255" key="1">
    <source>
        <dbReference type="HAMAP-Rule" id="MF_01961"/>
    </source>
</evidence>
<gene>
    <name evidence="1" type="primary">katG1</name>
    <name type="ordered locus">Bcen2424_0726</name>
</gene>
<feature type="chain" id="PRO_0000354734" description="Catalase-peroxidase 1">
    <location>
        <begin position="1"/>
        <end position="728"/>
    </location>
</feature>
<feature type="active site" description="Proton acceptor" evidence="1">
    <location>
        <position position="92"/>
    </location>
</feature>
<feature type="binding site" description="axial binding residue" evidence="1">
    <location>
        <position position="259"/>
    </location>
    <ligand>
        <name>heme b</name>
        <dbReference type="ChEBI" id="CHEBI:60344"/>
    </ligand>
    <ligandPart>
        <name>Fe</name>
        <dbReference type="ChEBI" id="CHEBI:18248"/>
    </ligandPart>
</feature>
<feature type="site" description="Transition state stabilizer" evidence="1">
    <location>
        <position position="88"/>
    </location>
</feature>
<feature type="cross-link" description="Tryptophyl-tyrosyl-methioninium (Trp-Tyr) (with M-244)" evidence="1">
    <location>
        <begin position="91"/>
        <end position="218"/>
    </location>
</feature>
<feature type="cross-link" description="Tryptophyl-tyrosyl-methioninium (Tyr-Met) (with W-91)" evidence="1">
    <location>
        <begin position="218"/>
        <end position="244"/>
    </location>
</feature>